<accession>A5IMI1</accession>
<proteinExistence type="inferred from homology"/>
<sequence>MNVAILLAAGKGERMSENVPKQFLEIEGRMLFEYPLSTFLKSEAIDGVVIVTRREWFEVVEKRVFHEKVLGIVEGGDTRSQSVRSALEFLEKFSPSYVLVHDSARPFLRKKHVSEVLRRARETGAATLALKNSDALVRVENDRMEYIPRKGVYRILTPQAFSYEILKKAHENGGEWADDTEPVQKLGVKIALVEGDPLCFKVTFKEDLELARIIAREWERIP</sequence>
<keyword id="KW-0414">Isoprene biosynthesis</keyword>
<keyword id="KW-0548">Nucleotidyltransferase</keyword>
<keyword id="KW-0808">Transferase</keyword>
<gene>
    <name evidence="1" type="primary">ispD</name>
    <name type="ordered locus">Tpet_1390</name>
</gene>
<name>ISPD_THEP1</name>
<protein>
    <recommendedName>
        <fullName evidence="1">2-C-methyl-D-erythritol 4-phosphate cytidylyltransferase</fullName>
        <ecNumber evidence="1">2.7.7.60</ecNumber>
    </recommendedName>
    <alternativeName>
        <fullName evidence="1">4-diphosphocytidyl-2C-methyl-D-erythritol synthase</fullName>
    </alternativeName>
    <alternativeName>
        <fullName evidence="1">MEP cytidylyltransferase</fullName>
        <shortName evidence="1">MCT</shortName>
    </alternativeName>
</protein>
<organism>
    <name type="scientific">Thermotoga petrophila (strain ATCC BAA-488 / DSM 13995 / JCM 10881 / RKU-1)</name>
    <dbReference type="NCBI Taxonomy" id="390874"/>
    <lineage>
        <taxon>Bacteria</taxon>
        <taxon>Thermotogati</taxon>
        <taxon>Thermotogota</taxon>
        <taxon>Thermotogae</taxon>
        <taxon>Thermotogales</taxon>
        <taxon>Thermotogaceae</taxon>
        <taxon>Thermotoga</taxon>
    </lineage>
</organism>
<dbReference type="EC" id="2.7.7.60" evidence="1"/>
<dbReference type="EMBL" id="CP000702">
    <property type="protein sequence ID" value="ABQ47404.1"/>
    <property type="molecule type" value="Genomic_DNA"/>
</dbReference>
<dbReference type="RefSeq" id="WP_011943863.1">
    <property type="nucleotide sequence ID" value="NC_009486.1"/>
</dbReference>
<dbReference type="SMR" id="A5IMI1"/>
<dbReference type="STRING" id="390874.Tpet_1390"/>
<dbReference type="KEGG" id="tpt:Tpet_1390"/>
<dbReference type="eggNOG" id="COG1211">
    <property type="taxonomic scope" value="Bacteria"/>
</dbReference>
<dbReference type="HOGENOM" id="CLU_061281_2_2_0"/>
<dbReference type="UniPathway" id="UPA00056">
    <property type="reaction ID" value="UER00093"/>
</dbReference>
<dbReference type="Proteomes" id="UP000006558">
    <property type="component" value="Chromosome"/>
</dbReference>
<dbReference type="GO" id="GO:0005829">
    <property type="term" value="C:cytosol"/>
    <property type="evidence" value="ECO:0007669"/>
    <property type="project" value="TreeGrafter"/>
</dbReference>
<dbReference type="GO" id="GO:0050518">
    <property type="term" value="F:2-C-methyl-D-erythritol 4-phosphate cytidylyltransferase activity"/>
    <property type="evidence" value="ECO:0007669"/>
    <property type="project" value="UniProtKB-UniRule"/>
</dbReference>
<dbReference type="GO" id="GO:0019288">
    <property type="term" value="P:isopentenyl diphosphate biosynthetic process, methylerythritol 4-phosphate pathway"/>
    <property type="evidence" value="ECO:0007669"/>
    <property type="project" value="UniProtKB-UniRule"/>
</dbReference>
<dbReference type="CDD" id="cd02516">
    <property type="entry name" value="CDP-ME_synthetase"/>
    <property type="match status" value="1"/>
</dbReference>
<dbReference type="FunFam" id="3.90.550.10:FF:000268">
    <property type="entry name" value="2-C-methyl-D-erythritol 4-phosphate cytidylyltransferase"/>
    <property type="match status" value="1"/>
</dbReference>
<dbReference type="Gene3D" id="3.90.550.10">
    <property type="entry name" value="Spore Coat Polysaccharide Biosynthesis Protein SpsA, Chain A"/>
    <property type="match status" value="1"/>
</dbReference>
<dbReference type="HAMAP" id="MF_00108">
    <property type="entry name" value="IspD"/>
    <property type="match status" value="1"/>
</dbReference>
<dbReference type="InterPro" id="IPR001228">
    <property type="entry name" value="IspD"/>
</dbReference>
<dbReference type="InterPro" id="IPR034683">
    <property type="entry name" value="IspD/TarI"/>
</dbReference>
<dbReference type="InterPro" id="IPR018294">
    <property type="entry name" value="ISPD_synthase_CS"/>
</dbReference>
<dbReference type="InterPro" id="IPR029044">
    <property type="entry name" value="Nucleotide-diphossugar_trans"/>
</dbReference>
<dbReference type="NCBIfam" id="TIGR00453">
    <property type="entry name" value="ispD"/>
    <property type="match status" value="1"/>
</dbReference>
<dbReference type="PANTHER" id="PTHR43015">
    <property type="entry name" value="D-RIBITOL-5-PHOSPHATE CYTIDYLYLTRANSFERASE"/>
    <property type="match status" value="1"/>
</dbReference>
<dbReference type="PANTHER" id="PTHR43015:SF1">
    <property type="entry name" value="D-RIBITOL-5-PHOSPHATE CYTIDYLYLTRANSFERASE"/>
    <property type="match status" value="1"/>
</dbReference>
<dbReference type="Pfam" id="PF01128">
    <property type="entry name" value="IspD"/>
    <property type="match status" value="1"/>
</dbReference>
<dbReference type="SUPFAM" id="SSF53448">
    <property type="entry name" value="Nucleotide-diphospho-sugar transferases"/>
    <property type="match status" value="1"/>
</dbReference>
<dbReference type="PROSITE" id="PS01295">
    <property type="entry name" value="ISPD"/>
    <property type="match status" value="1"/>
</dbReference>
<reference key="1">
    <citation type="submission" date="2007-05" db="EMBL/GenBank/DDBJ databases">
        <title>Complete sequence of Thermotoga petrophila RKU-1.</title>
        <authorList>
            <consortium name="US DOE Joint Genome Institute"/>
            <person name="Copeland A."/>
            <person name="Lucas S."/>
            <person name="Lapidus A."/>
            <person name="Barry K."/>
            <person name="Glavina del Rio T."/>
            <person name="Dalin E."/>
            <person name="Tice H."/>
            <person name="Pitluck S."/>
            <person name="Sims D."/>
            <person name="Brettin T."/>
            <person name="Bruce D."/>
            <person name="Detter J.C."/>
            <person name="Han C."/>
            <person name="Tapia R."/>
            <person name="Schmutz J."/>
            <person name="Larimer F."/>
            <person name="Land M."/>
            <person name="Hauser L."/>
            <person name="Kyrpides N."/>
            <person name="Mikhailova N."/>
            <person name="Nelson K."/>
            <person name="Gogarten J.P."/>
            <person name="Noll K."/>
            <person name="Richardson P."/>
        </authorList>
    </citation>
    <scope>NUCLEOTIDE SEQUENCE [LARGE SCALE GENOMIC DNA]</scope>
    <source>
        <strain>ATCC BAA-488 / DSM 13995 / JCM 10881 / RKU-1</strain>
    </source>
</reference>
<evidence type="ECO:0000255" key="1">
    <source>
        <dbReference type="HAMAP-Rule" id="MF_00108"/>
    </source>
</evidence>
<feature type="chain" id="PRO_1000022956" description="2-C-methyl-D-erythritol 4-phosphate cytidylyltransferase">
    <location>
        <begin position="1"/>
        <end position="222"/>
    </location>
</feature>
<feature type="site" description="Transition state stabilizer" evidence="1">
    <location>
        <position position="14"/>
    </location>
</feature>
<feature type="site" description="Transition state stabilizer" evidence="1">
    <location>
        <position position="21"/>
    </location>
</feature>
<feature type="site" description="Positions MEP for the nucleophilic attack" evidence="1">
    <location>
        <position position="149"/>
    </location>
</feature>
<feature type="site" description="Positions MEP for the nucleophilic attack" evidence="1">
    <location>
        <position position="201"/>
    </location>
</feature>
<comment type="function">
    <text evidence="1">Catalyzes the formation of 4-diphosphocytidyl-2-C-methyl-D-erythritol from CTP and 2-C-methyl-D-erythritol 4-phosphate (MEP).</text>
</comment>
<comment type="catalytic activity">
    <reaction evidence="1">
        <text>2-C-methyl-D-erythritol 4-phosphate + CTP + H(+) = 4-CDP-2-C-methyl-D-erythritol + diphosphate</text>
        <dbReference type="Rhea" id="RHEA:13429"/>
        <dbReference type="ChEBI" id="CHEBI:15378"/>
        <dbReference type="ChEBI" id="CHEBI:33019"/>
        <dbReference type="ChEBI" id="CHEBI:37563"/>
        <dbReference type="ChEBI" id="CHEBI:57823"/>
        <dbReference type="ChEBI" id="CHEBI:58262"/>
        <dbReference type="EC" id="2.7.7.60"/>
    </reaction>
</comment>
<comment type="pathway">
    <text evidence="1">Isoprenoid biosynthesis; isopentenyl diphosphate biosynthesis via DXP pathway; isopentenyl diphosphate from 1-deoxy-D-xylulose 5-phosphate: step 2/6.</text>
</comment>
<comment type="similarity">
    <text evidence="1">Belongs to the IspD/TarI cytidylyltransferase family. IspD subfamily.</text>
</comment>